<proteinExistence type="inferred from homology"/>
<dbReference type="EC" id="6.1.1.15" evidence="1"/>
<dbReference type="EMBL" id="CP000050">
    <property type="protein sequence ID" value="AAY50638.1"/>
    <property type="molecule type" value="Genomic_DNA"/>
</dbReference>
<dbReference type="RefSeq" id="WP_011035881.1">
    <property type="nucleotide sequence ID" value="NZ_CP155948.1"/>
</dbReference>
<dbReference type="SMR" id="Q4UQN5"/>
<dbReference type="KEGG" id="xcb:XC_3596"/>
<dbReference type="HOGENOM" id="CLU_016739_0_0_6"/>
<dbReference type="Proteomes" id="UP000000420">
    <property type="component" value="Chromosome"/>
</dbReference>
<dbReference type="GO" id="GO:0005829">
    <property type="term" value="C:cytosol"/>
    <property type="evidence" value="ECO:0007669"/>
    <property type="project" value="TreeGrafter"/>
</dbReference>
<dbReference type="GO" id="GO:0002161">
    <property type="term" value="F:aminoacyl-tRNA deacylase activity"/>
    <property type="evidence" value="ECO:0007669"/>
    <property type="project" value="InterPro"/>
</dbReference>
<dbReference type="GO" id="GO:0005524">
    <property type="term" value="F:ATP binding"/>
    <property type="evidence" value="ECO:0007669"/>
    <property type="project" value="UniProtKB-UniRule"/>
</dbReference>
<dbReference type="GO" id="GO:0004827">
    <property type="term" value="F:proline-tRNA ligase activity"/>
    <property type="evidence" value="ECO:0007669"/>
    <property type="project" value="UniProtKB-UniRule"/>
</dbReference>
<dbReference type="GO" id="GO:0006433">
    <property type="term" value="P:prolyl-tRNA aminoacylation"/>
    <property type="evidence" value="ECO:0007669"/>
    <property type="project" value="UniProtKB-UniRule"/>
</dbReference>
<dbReference type="CDD" id="cd04334">
    <property type="entry name" value="ProRS-INS"/>
    <property type="match status" value="1"/>
</dbReference>
<dbReference type="CDD" id="cd00861">
    <property type="entry name" value="ProRS_anticodon_short"/>
    <property type="match status" value="1"/>
</dbReference>
<dbReference type="CDD" id="cd00779">
    <property type="entry name" value="ProRS_core_prok"/>
    <property type="match status" value="1"/>
</dbReference>
<dbReference type="FunFam" id="3.30.930.10:FF:000012">
    <property type="entry name" value="Proline--tRNA ligase"/>
    <property type="match status" value="1"/>
</dbReference>
<dbReference type="FunFam" id="3.30.930.10:FF:000062">
    <property type="entry name" value="Proline--tRNA ligase"/>
    <property type="match status" value="1"/>
</dbReference>
<dbReference type="Gene3D" id="3.40.50.800">
    <property type="entry name" value="Anticodon-binding domain"/>
    <property type="match status" value="1"/>
</dbReference>
<dbReference type="Gene3D" id="3.30.930.10">
    <property type="entry name" value="Bira Bifunctional Protein, Domain 2"/>
    <property type="match status" value="2"/>
</dbReference>
<dbReference type="Gene3D" id="3.90.960.10">
    <property type="entry name" value="YbaK/aminoacyl-tRNA synthetase-associated domain"/>
    <property type="match status" value="1"/>
</dbReference>
<dbReference type="HAMAP" id="MF_01569">
    <property type="entry name" value="Pro_tRNA_synth_type1"/>
    <property type="match status" value="1"/>
</dbReference>
<dbReference type="InterPro" id="IPR002314">
    <property type="entry name" value="aa-tRNA-synt_IIb"/>
</dbReference>
<dbReference type="InterPro" id="IPR006195">
    <property type="entry name" value="aa-tRNA-synth_II"/>
</dbReference>
<dbReference type="InterPro" id="IPR045864">
    <property type="entry name" value="aa-tRNA-synth_II/BPL/LPL"/>
</dbReference>
<dbReference type="InterPro" id="IPR004154">
    <property type="entry name" value="Anticodon-bd"/>
</dbReference>
<dbReference type="InterPro" id="IPR036621">
    <property type="entry name" value="Anticodon-bd_dom_sf"/>
</dbReference>
<dbReference type="InterPro" id="IPR002316">
    <property type="entry name" value="Pro-tRNA-ligase_IIa"/>
</dbReference>
<dbReference type="InterPro" id="IPR004500">
    <property type="entry name" value="Pro-tRNA-synth_IIa_bac-type"/>
</dbReference>
<dbReference type="InterPro" id="IPR023717">
    <property type="entry name" value="Pro-tRNA-Synthase_IIa_type1"/>
</dbReference>
<dbReference type="InterPro" id="IPR050062">
    <property type="entry name" value="Pro-tRNA_synthetase"/>
</dbReference>
<dbReference type="InterPro" id="IPR044140">
    <property type="entry name" value="ProRS_anticodon_short"/>
</dbReference>
<dbReference type="InterPro" id="IPR033730">
    <property type="entry name" value="ProRS_core_prok"/>
</dbReference>
<dbReference type="InterPro" id="IPR036754">
    <property type="entry name" value="YbaK/aa-tRNA-synt-asso_dom_sf"/>
</dbReference>
<dbReference type="InterPro" id="IPR007214">
    <property type="entry name" value="YbaK/aa-tRNA-synth-assoc-dom"/>
</dbReference>
<dbReference type="NCBIfam" id="NF006625">
    <property type="entry name" value="PRK09194.1"/>
    <property type="match status" value="1"/>
</dbReference>
<dbReference type="NCBIfam" id="TIGR00409">
    <property type="entry name" value="proS_fam_II"/>
    <property type="match status" value="1"/>
</dbReference>
<dbReference type="PANTHER" id="PTHR42753">
    <property type="entry name" value="MITOCHONDRIAL RIBOSOME PROTEIN L39/PROLYL-TRNA LIGASE FAMILY MEMBER"/>
    <property type="match status" value="1"/>
</dbReference>
<dbReference type="PANTHER" id="PTHR42753:SF2">
    <property type="entry name" value="PROLINE--TRNA LIGASE"/>
    <property type="match status" value="1"/>
</dbReference>
<dbReference type="Pfam" id="PF03129">
    <property type="entry name" value="HGTP_anticodon"/>
    <property type="match status" value="1"/>
</dbReference>
<dbReference type="Pfam" id="PF00587">
    <property type="entry name" value="tRNA-synt_2b"/>
    <property type="match status" value="1"/>
</dbReference>
<dbReference type="Pfam" id="PF04073">
    <property type="entry name" value="tRNA_edit"/>
    <property type="match status" value="1"/>
</dbReference>
<dbReference type="PRINTS" id="PR01046">
    <property type="entry name" value="TRNASYNTHPRO"/>
</dbReference>
<dbReference type="SUPFAM" id="SSF52954">
    <property type="entry name" value="Class II aaRS ABD-related"/>
    <property type="match status" value="1"/>
</dbReference>
<dbReference type="SUPFAM" id="SSF55681">
    <property type="entry name" value="Class II aaRS and biotin synthetases"/>
    <property type="match status" value="1"/>
</dbReference>
<dbReference type="SUPFAM" id="SSF55826">
    <property type="entry name" value="YbaK/ProRS associated domain"/>
    <property type="match status" value="1"/>
</dbReference>
<dbReference type="PROSITE" id="PS50862">
    <property type="entry name" value="AA_TRNA_LIGASE_II"/>
    <property type="match status" value="1"/>
</dbReference>
<comment type="function">
    <text evidence="1">Catalyzes the attachment of proline to tRNA(Pro) in a two-step reaction: proline is first activated by ATP to form Pro-AMP and then transferred to the acceptor end of tRNA(Pro). As ProRS can inadvertently accommodate and process non-cognate amino acids such as alanine and cysteine, to avoid such errors it has two additional distinct editing activities against alanine. One activity is designated as 'pretransfer' editing and involves the tRNA(Pro)-independent hydrolysis of activated Ala-AMP. The other activity is designated 'posttransfer' editing and involves deacylation of mischarged Ala-tRNA(Pro). The misacylated Cys-tRNA(Pro) is not edited by ProRS.</text>
</comment>
<comment type="catalytic activity">
    <reaction evidence="1">
        <text>tRNA(Pro) + L-proline + ATP = L-prolyl-tRNA(Pro) + AMP + diphosphate</text>
        <dbReference type="Rhea" id="RHEA:14305"/>
        <dbReference type="Rhea" id="RHEA-COMP:9700"/>
        <dbReference type="Rhea" id="RHEA-COMP:9702"/>
        <dbReference type="ChEBI" id="CHEBI:30616"/>
        <dbReference type="ChEBI" id="CHEBI:33019"/>
        <dbReference type="ChEBI" id="CHEBI:60039"/>
        <dbReference type="ChEBI" id="CHEBI:78442"/>
        <dbReference type="ChEBI" id="CHEBI:78532"/>
        <dbReference type="ChEBI" id="CHEBI:456215"/>
        <dbReference type="EC" id="6.1.1.15"/>
    </reaction>
</comment>
<comment type="subunit">
    <text evidence="1">Homodimer.</text>
</comment>
<comment type="subcellular location">
    <subcellularLocation>
        <location evidence="1">Cytoplasm</location>
    </subcellularLocation>
</comment>
<comment type="domain">
    <text evidence="1">Consists of three domains: the N-terminal catalytic domain, the editing domain and the C-terminal anticodon-binding domain.</text>
</comment>
<comment type="similarity">
    <text evidence="1">Belongs to the class-II aminoacyl-tRNA synthetase family. ProS type 1 subfamily.</text>
</comment>
<reference key="1">
    <citation type="journal article" date="2005" name="Genome Res.">
        <title>Comparative and functional genomic analyses of the pathogenicity of phytopathogen Xanthomonas campestris pv. campestris.</title>
        <authorList>
            <person name="Qian W."/>
            <person name="Jia Y."/>
            <person name="Ren S.-X."/>
            <person name="He Y.-Q."/>
            <person name="Feng J.-X."/>
            <person name="Lu L.-F."/>
            <person name="Sun Q."/>
            <person name="Ying G."/>
            <person name="Tang D.-J."/>
            <person name="Tang H."/>
            <person name="Wu W."/>
            <person name="Hao P."/>
            <person name="Wang L."/>
            <person name="Jiang B.-L."/>
            <person name="Zeng S."/>
            <person name="Gu W.-Y."/>
            <person name="Lu G."/>
            <person name="Rong L."/>
            <person name="Tian Y."/>
            <person name="Yao Z."/>
            <person name="Fu G."/>
            <person name="Chen B."/>
            <person name="Fang R."/>
            <person name="Qiang B."/>
            <person name="Chen Z."/>
            <person name="Zhao G.-P."/>
            <person name="Tang J.-L."/>
            <person name="He C."/>
        </authorList>
    </citation>
    <scope>NUCLEOTIDE SEQUENCE [LARGE SCALE GENOMIC DNA]</scope>
    <source>
        <strain>8004</strain>
    </source>
</reference>
<sequence>MRLSQFHLHTTKETPADAELVSHRLMLRAGMIRKLASGLYTWSPLGLRVLRKVEAIVREEMNRAGAVEVLFPTIQPRELWDATGRWEKFGGQLLKIKDRKEQEFCYTPTAEEAAAEFARQEINSYKQLPLNFYQIQTKFRDEIRPRFGVMRAREFLMKDAYSFHLTDADMAREYDNMRAAYIRIFTRLGLEFRAVQADSGAIGGDASQEFHVIAESGEDSLAFSTGSDYAANVETASAALPAPRPAAGETLQRVDTPTQKTCEDVAQLLGLPLQRTVKSIAVMTTAGFVLVLVRGDHAVNELKLAKVAGMADYRLANESEIRQHLGSEPGFLGPVQPAQPIRIIADRDVAAMADFVVGANAVGVHLTGVNWGRDLPEPETVADVRNVVDGDRASDGGELRLTRGIEVGHVFQLGSKYAEALQATVLDENGKAAVMKMGCYGIGISRIVAAAIEQNHDDAGIVWPAPMAPWKVVVCVINPKQDAQVAAAAGDLLEELIAAGIDAALDDRGLRPGAMFADMELLGVPHRVVVSERGLAAGTFEYRARTAESAENLDKAGLFSRLGN</sequence>
<protein>
    <recommendedName>
        <fullName evidence="1">Proline--tRNA ligase</fullName>
        <ecNumber evidence="1">6.1.1.15</ecNumber>
    </recommendedName>
    <alternativeName>
        <fullName evidence="1">Prolyl-tRNA synthetase</fullName>
        <shortName evidence="1">ProRS</shortName>
    </alternativeName>
</protein>
<gene>
    <name evidence="1" type="primary">proS</name>
    <name type="ordered locus">XC_3596</name>
</gene>
<organism>
    <name type="scientific">Xanthomonas campestris pv. campestris (strain 8004)</name>
    <dbReference type="NCBI Taxonomy" id="314565"/>
    <lineage>
        <taxon>Bacteria</taxon>
        <taxon>Pseudomonadati</taxon>
        <taxon>Pseudomonadota</taxon>
        <taxon>Gammaproteobacteria</taxon>
        <taxon>Lysobacterales</taxon>
        <taxon>Lysobacteraceae</taxon>
        <taxon>Xanthomonas</taxon>
    </lineage>
</organism>
<evidence type="ECO:0000255" key="1">
    <source>
        <dbReference type="HAMAP-Rule" id="MF_01569"/>
    </source>
</evidence>
<feature type="chain" id="PRO_0000248817" description="Proline--tRNA ligase">
    <location>
        <begin position="1"/>
        <end position="564"/>
    </location>
</feature>
<accession>Q4UQN5</accession>
<name>SYP_XANC8</name>
<keyword id="KW-0030">Aminoacyl-tRNA synthetase</keyword>
<keyword id="KW-0067">ATP-binding</keyword>
<keyword id="KW-0963">Cytoplasm</keyword>
<keyword id="KW-0436">Ligase</keyword>
<keyword id="KW-0547">Nucleotide-binding</keyword>
<keyword id="KW-0648">Protein biosynthesis</keyword>